<feature type="chain" id="PRO_1000015087" description="Small ribosomal subunit protein uS10">
    <location>
        <begin position="1"/>
        <end position="103"/>
    </location>
</feature>
<organism>
    <name type="scientific">Ectopseudomonas mendocina (strain ymp)</name>
    <name type="common">Pseudomonas mendocina</name>
    <dbReference type="NCBI Taxonomy" id="399739"/>
    <lineage>
        <taxon>Bacteria</taxon>
        <taxon>Pseudomonadati</taxon>
        <taxon>Pseudomonadota</taxon>
        <taxon>Gammaproteobacteria</taxon>
        <taxon>Pseudomonadales</taxon>
        <taxon>Pseudomonadaceae</taxon>
        <taxon>Ectopseudomonas</taxon>
    </lineage>
</organism>
<proteinExistence type="inferred from homology"/>
<gene>
    <name evidence="1" type="primary">rpsJ</name>
    <name type="ordered locus">Pmen_3910</name>
</gene>
<evidence type="ECO:0000255" key="1">
    <source>
        <dbReference type="HAMAP-Rule" id="MF_00508"/>
    </source>
</evidence>
<evidence type="ECO:0000305" key="2"/>
<sequence>MQNQQIRIRLKAFDHRLIDQSTQEIVETAKRTGAQVRGPIPLPTRKERYTVLISPHVNKDARDQYEIRTHKRVLDIVQPTDKTVDALMKLDLAAGVEVQISLG</sequence>
<dbReference type="EMBL" id="CP000680">
    <property type="protein sequence ID" value="ABP86657.1"/>
    <property type="molecule type" value="Genomic_DNA"/>
</dbReference>
<dbReference type="SMR" id="A4XZ91"/>
<dbReference type="STRING" id="399739.Pmen_3910"/>
<dbReference type="KEGG" id="pmy:Pmen_3910"/>
<dbReference type="eggNOG" id="COG0051">
    <property type="taxonomic scope" value="Bacteria"/>
</dbReference>
<dbReference type="HOGENOM" id="CLU_122625_1_3_6"/>
<dbReference type="OrthoDB" id="9804464at2"/>
<dbReference type="GO" id="GO:1990904">
    <property type="term" value="C:ribonucleoprotein complex"/>
    <property type="evidence" value="ECO:0007669"/>
    <property type="project" value="UniProtKB-KW"/>
</dbReference>
<dbReference type="GO" id="GO:0005840">
    <property type="term" value="C:ribosome"/>
    <property type="evidence" value="ECO:0007669"/>
    <property type="project" value="UniProtKB-KW"/>
</dbReference>
<dbReference type="GO" id="GO:0003735">
    <property type="term" value="F:structural constituent of ribosome"/>
    <property type="evidence" value="ECO:0007669"/>
    <property type="project" value="InterPro"/>
</dbReference>
<dbReference type="GO" id="GO:0000049">
    <property type="term" value="F:tRNA binding"/>
    <property type="evidence" value="ECO:0007669"/>
    <property type="project" value="UniProtKB-UniRule"/>
</dbReference>
<dbReference type="GO" id="GO:0006412">
    <property type="term" value="P:translation"/>
    <property type="evidence" value="ECO:0007669"/>
    <property type="project" value="UniProtKB-UniRule"/>
</dbReference>
<dbReference type="FunFam" id="3.30.70.600:FF:000001">
    <property type="entry name" value="30S ribosomal protein S10"/>
    <property type="match status" value="1"/>
</dbReference>
<dbReference type="Gene3D" id="3.30.70.600">
    <property type="entry name" value="Ribosomal protein S10 domain"/>
    <property type="match status" value="1"/>
</dbReference>
<dbReference type="HAMAP" id="MF_00508">
    <property type="entry name" value="Ribosomal_uS10"/>
    <property type="match status" value="1"/>
</dbReference>
<dbReference type="InterPro" id="IPR001848">
    <property type="entry name" value="Ribosomal_uS10"/>
</dbReference>
<dbReference type="InterPro" id="IPR018268">
    <property type="entry name" value="Ribosomal_uS10_CS"/>
</dbReference>
<dbReference type="InterPro" id="IPR027486">
    <property type="entry name" value="Ribosomal_uS10_dom"/>
</dbReference>
<dbReference type="InterPro" id="IPR036838">
    <property type="entry name" value="Ribosomal_uS10_dom_sf"/>
</dbReference>
<dbReference type="NCBIfam" id="NF001861">
    <property type="entry name" value="PRK00596.1"/>
    <property type="match status" value="1"/>
</dbReference>
<dbReference type="NCBIfam" id="TIGR01049">
    <property type="entry name" value="rpsJ_bact"/>
    <property type="match status" value="1"/>
</dbReference>
<dbReference type="PANTHER" id="PTHR11700">
    <property type="entry name" value="30S RIBOSOMAL PROTEIN S10 FAMILY MEMBER"/>
    <property type="match status" value="1"/>
</dbReference>
<dbReference type="Pfam" id="PF00338">
    <property type="entry name" value="Ribosomal_S10"/>
    <property type="match status" value="1"/>
</dbReference>
<dbReference type="PRINTS" id="PR00971">
    <property type="entry name" value="RIBOSOMALS10"/>
</dbReference>
<dbReference type="SMART" id="SM01403">
    <property type="entry name" value="Ribosomal_S10"/>
    <property type="match status" value="1"/>
</dbReference>
<dbReference type="SUPFAM" id="SSF54999">
    <property type="entry name" value="Ribosomal protein S10"/>
    <property type="match status" value="1"/>
</dbReference>
<dbReference type="PROSITE" id="PS00361">
    <property type="entry name" value="RIBOSOMAL_S10"/>
    <property type="match status" value="1"/>
</dbReference>
<keyword id="KW-0687">Ribonucleoprotein</keyword>
<keyword id="KW-0689">Ribosomal protein</keyword>
<reference key="1">
    <citation type="submission" date="2007-04" db="EMBL/GenBank/DDBJ databases">
        <title>Complete sequence of Pseudomonas mendocina ymp.</title>
        <authorList>
            <consortium name="US DOE Joint Genome Institute"/>
            <person name="Copeland A."/>
            <person name="Lucas S."/>
            <person name="Lapidus A."/>
            <person name="Barry K."/>
            <person name="Glavina del Rio T."/>
            <person name="Dalin E."/>
            <person name="Tice H."/>
            <person name="Pitluck S."/>
            <person name="Kiss H."/>
            <person name="Brettin T."/>
            <person name="Detter J.C."/>
            <person name="Bruce D."/>
            <person name="Han C."/>
            <person name="Schmutz J."/>
            <person name="Larimer F."/>
            <person name="Land M."/>
            <person name="Hauser L."/>
            <person name="Kyrpides N."/>
            <person name="Mikhailova N."/>
            <person name="Hersman L."/>
            <person name="Dubois J."/>
            <person name="Maurice P."/>
            <person name="Richardson P."/>
        </authorList>
    </citation>
    <scope>NUCLEOTIDE SEQUENCE [LARGE SCALE GENOMIC DNA]</scope>
    <source>
        <strain>ymp</strain>
    </source>
</reference>
<name>RS10_ECTM1</name>
<accession>A4XZ91</accession>
<protein>
    <recommendedName>
        <fullName evidence="1">Small ribosomal subunit protein uS10</fullName>
    </recommendedName>
    <alternativeName>
        <fullName evidence="2">30S ribosomal protein S10</fullName>
    </alternativeName>
</protein>
<comment type="function">
    <text evidence="1">Involved in the binding of tRNA to the ribosomes.</text>
</comment>
<comment type="subunit">
    <text evidence="1">Part of the 30S ribosomal subunit.</text>
</comment>
<comment type="similarity">
    <text evidence="1">Belongs to the universal ribosomal protein uS10 family.</text>
</comment>